<organism>
    <name type="scientific">Hylobates lar</name>
    <name type="common">Lar gibbon</name>
    <name type="synonym">White-handed gibbon</name>
    <dbReference type="NCBI Taxonomy" id="9580"/>
    <lineage>
        <taxon>Eukaryota</taxon>
        <taxon>Metazoa</taxon>
        <taxon>Chordata</taxon>
        <taxon>Craniata</taxon>
        <taxon>Vertebrata</taxon>
        <taxon>Euteleostomi</taxon>
        <taxon>Mammalia</taxon>
        <taxon>Eutheria</taxon>
        <taxon>Euarchontoglires</taxon>
        <taxon>Primates</taxon>
        <taxon>Haplorrhini</taxon>
        <taxon>Catarrhini</taxon>
        <taxon>Hylobatidae</taxon>
        <taxon>Hylobates</taxon>
    </lineage>
</organism>
<dbReference type="EMBL" id="AM410150">
    <property type="protein sequence ID" value="CAL68960.1"/>
    <property type="molecule type" value="Genomic_DNA"/>
</dbReference>
<dbReference type="GO" id="GO:0005576">
    <property type="term" value="C:extracellular region"/>
    <property type="evidence" value="ECO:0007669"/>
    <property type="project" value="UniProtKB-SubCell"/>
</dbReference>
<dbReference type="GO" id="GO:0042742">
    <property type="term" value="P:defense response to bacterium"/>
    <property type="evidence" value="ECO:0007669"/>
    <property type="project" value="UniProtKB-KW"/>
</dbReference>
<dbReference type="GO" id="GO:0007338">
    <property type="term" value="P:single fertilization"/>
    <property type="evidence" value="ECO:0007669"/>
    <property type="project" value="UniProtKB-KW"/>
</dbReference>
<dbReference type="InterPro" id="IPR050544">
    <property type="entry name" value="Beta-defensin"/>
</dbReference>
<dbReference type="PANTHER" id="PTHR15001:SF3">
    <property type="entry name" value="BETA-DEFENSIN 123"/>
    <property type="match status" value="1"/>
</dbReference>
<dbReference type="PANTHER" id="PTHR15001">
    <property type="entry name" value="BETA-DEFENSIN 123-RELATED"/>
    <property type="match status" value="1"/>
</dbReference>
<protein>
    <recommendedName>
        <fullName>Beta-defensin 126</fullName>
    </recommendedName>
    <alternativeName>
        <fullName>Defensin, beta 126</fullName>
    </alternativeName>
</protein>
<comment type="function">
    <text evidence="2 3">Highly glycosylated atypical beta-defensin involved in several aspects of sperm function. Facilitates sperm transport in the female reproductive tract and contributes to sperm protection against immunodetection; both functions are probably implicating the negative surface charge provided by its O-linked oligosaccharides in the sperm glycocalyx. Involved in binding of sperm to oviductal epithelial cells to form a sperm reservoir until ovulation. Release from the sperm surface during capacitation and ovaluation by an elevation of oviductal fluid pH is unmasking other surface components and allows sperm to penetrate the cumulus matrix and bind to the zona pellucida of the oocyte. In vitro has antimicrobial activity and may inhibit LPS-mediated inflammation (By similarity).</text>
</comment>
<comment type="subunit">
    <text evidence="2">Homodimer or homooligomer; disulfide-linked.</text>
</comment>
<comment type="subcellular location">
    <subcellularLocation>
        <location evidence="2">Secreted</location>
    </subcellularLocation>
    <text evidence="2">Secreted by epididymal cells and is absorbed to the surface of sperm during transit through the epididymis.</text>
</comment>
<comment type="PTM">
    <text evidence="2 3">O-glycosylated; glycans contain alpha(2,3)-linked sialic acids (By similarity).</text>
</comment>
<comment type="similarity">
    <text evidence="5">Belongs to the beta-defensin family.</text>
</comment>
<proteinExistence type="inferred from homology"/>
<feature type="signal peptide" evidence="4">
    <location>
        <begin position="1"/>
        <end position="20"/>
    </location>
</feature>
<feature type="chain" id="PRO_0000436300" description="Beta-defensin 126">
    <location>
        <begin position="21"/>
        <end position="112"/>
    </location>
</feature>
<feature type="region of interest" description="In vitro binds to LPS, mediates antimicrobial activity and inhibits LPS-mediated inflammation" evidence="3">
    <location>
        <begin position="21"/>
        <end position="63"/>
    </location>
</feature>
<feature type="disulfide bond" evidence="1">
    <location>
        <begin position="27"/>
        <end position="58"/>
    </location>
</feature>
<feature type="disulfide bond" evidence="1">
    <location>
        <begin position="34"/>
        <end position="52"/>
    </location>
</feature>
<feature type="disulfide bond" evidence="1">
    <location>
        <begin position="38"/>
        <end position="59"/>
    </location>
</feature>
<feature type="disulfide bond" description="Interchain" evidence="2">
    <location>
        <position position="72"/>
    </location>
</feature>
<accession>A4H245</accession>
<reference key="1">
    <citation type="submission" date="2006-11" db="EMBL/GenBank/DDBJ databases">
        <title>Evolution and sequence variation of human beta-defensin genes.</title>
        <authorList>
            <person name="Hollox E.J."/>
            <person name="Armour J.A.L."/>
        </authorList>
    </citation>
    <scope>NUCLEOTIDE SEQUENCE [GENOMIC DNA]</scope>
</reference>
<evidence type="ECO:0000250" key="1">
    <source>
        <dbReference type="UniProtKB" id="P59665"/>
    </source>
</evidence>
<evidence type="ECO:0000250" key="2">
    <source>
        <dbReference type="UniProtKB" id="Q9BEE3"/>
    </source>
</evidence>
<evidence type="ECO:0000250" key="3">
    <source>
        <dbReference type="UniProtKB" id="Q9BYW3"/>
    </source>
</evidence>
<evidence type="ECO:0000255" key="4"/>
<evidence type="ECO:0000305" key="5"/>
<name>DB126_HYLLA</name>
<gene>
    <name type="primary">DEFB126</name>
</gene>
<sequence>MKSLLFTLAVFMLLAQLVSGNWYVKKCLNDVGICKKKCKPEELHVKNGRAMCGKQRDCCVPADKRANYPAFCVQTKTTRTSTVTATAATTTTLVMTTASMSSMAPTPVSPTS</sequence>
<keyword id="KW-0044">Antibiotic</keyword>
<keyword id="KW-0929">Antimicrobial</keyword>
<keyword id="KW-0165">Cleavage on pair of basic residues</keyword>
<keyword id="KW-0211">Defensin</keyword>
<keyword id="KW-1015">Disulfide bond</keyword>
<keyword id="KW-0278">Fertilization</keyword>
<keyword id="KW-0964">Secreted</keyword>
<keyword id="KW-0732">Signal</keyword>